<sequence>MSMIEEIYAREIFDSRGNPTVEVELYTESGAYGFARVPSGASTGVHEALELRDGEDRFGGKGVRKACSKVNEEIGPNLVGMDVTFQSAIDRALLELDGTDNKENLGANAMLGVSLAAARASAEFLGLPLYQVLGGVSSSTLPIPQMNILNGGEHADNNVDIQEFMIMPIRANNFQHAMRMGVEIFHALKNVLKDEGLSTSVGDEGGFAPDLKSNKEALEYIITAIEKVGYKPGEQVMLAIDAAASELYQGDKYHLEGEGKSLTADEMIDLYQDLVENYPIISIEDGLSEDDWEGWKKMTEKFQGKIQLVGDDLFVTNTDRLTRGIKEDIANSILIKLNQIGTVTETLEAIELAKKNGYTSVISHRSGETDDPFIADLAVATNAGQIKTGAPSRMDRVAKYNQLIRISEELYGVSRYPGMGSFYNLEV</sequence>
<accession>B2A6Z1</accession>
<comment type="function">
    <text evidence="1">Catalyzes the reversible conversion of 2-phosphoglycerate (2-PG) into phosphoenolpyruvate (PEP). It is essential for the degradation of carbohydrates via glycolysis.</text>
</comment>
<comment type="catalytic activity">
    <reaction evidence="1">
        <text>(2R)-2-phosphoglycerate = phosphoenolpyruvate + H2O</text>
        <dbReference type="Rhea" id="RHEA:10164"/>
        <dbReference type="ChEBI" id="CHEBI:15377"/>
        <dbReference type="ChEBI" id="CHEBI:58289"/>
        <dbReference type="ChEBI" id="CHEBI:58702"/>
        <dbReference type="EC" id="4.2.1.11"/>
    </reaction>
</comment>
<comment type="cofactor">
    <cofactor evidence="1">
        <name>Mg(2+)</name>
        <dbReference type="ChEBI" id="CHEBI:18420"/>
    </cofactor>
    <text evidence="1">Binds a second Mg(2+) ion via substrate during catalysis.</text>
</comment>
<comment type="pathway">
    <text evidence="1">Carbohydrate degradation; glycolysis; pyruvate from D-glyceraldehyde 3-phosphate: step 4/5.</text>
</comment>
<comment type="subcellular location">
    <subcellularLocation>
        <location evidence="1">Cytoplasm</location>
    </subcellularLocation>
    <subcellularLocation>
        <location evidence="1">Secreted</location>
    </subcellularLocation>
    <subcellularLocation>
        <location evidence="1">Cell surface</location>
    </subcellularLocation>
    <text evidence="1">Fractions of enolase are present in both the cytoplasm and on the cell surface.</text>
</comment>
<comment type="similarity">
    <text evidence="1">Belongs to the enolase family.</text>
</comment>
<reference key="1">
    <citation type="submission" date="2008-04" db="EMBL/GenBank/DDBJ databases">
        <title>Complete sequence of chromosome of Natranaerobius thermophilus JW/NM-WN-LF.</title>
        <authorList>
            <consortium name="US DOE Joint Genome Institute"/>
            <person name="Copeland A."/>
            <person name="Lucas S."/>
            <person name="Lapidus A."/>
            <person name="Glavina del Rio T."/>
            <person name="Dalin E."/>
            <person name="Tice H."/>
            <person name="Bruce D."/>
            <person name="Goodwin L."/>
            <person name="Pitluck S."/>
            <person name="Chertkov O."/>
            <person name="Brettin T."/>
            <person name="Detter J.C."/>
            <person name="Han C."/>
            <person name="Kuske C.R."/>
            <person name="Schmutz J."/>
            <person name="Larimer F."/>
            <person name="Land M."/>
            <person name="Hauser L."/>
            <person name="Kyrpides N."/>
            <person name="Lykidis A."/>
            <person name="Mesbah N.M."/>
            <person name="Wiegel J."/>
        </authorList>
    </citation>
    <scope>NUCLEOTIDE SEQUENCE [LARGE SCALE GENOMIC DNA]</scope>
    <source>
        <strain>ATCC BAA-1301 / DSM 18059 / JW/NM-WN-LF</strain>
    </source>
</reference>
<gene>
    <name evidence="1" type="primary">eno</name>
    <name type="ordered locus">Nther_2015</name>
</gene>
<protein>
    <recommendedName>
        <fullName evidence="1">Enolase</fullName>
        <ecNumber evidence="1">4.2.1.11</ecNumber>
    </recommendedName>
    <alternativeName>
        <fullName evidence="1">2-phospho-D-glycerate hydro-lyase</fullName>
    </alternativeName>
    <alternativeName>
        <fullName evidence="1">2-phosphoglycerate dehydratase</fullName>
    </alternativeName>
</protein>
<evidence type="ECO:0000255" key="1">
    <source>
        <dbReference type="HAMAP-Rule" id="MF_00318"/>
    </source>
</evidence>
<feature type="chain" id="PRO_1000115890" description="Enolase">
    <location>
        <begin position="1"/>
        <end position="427"/>
    </location>
</feature>
<feature type="active site" description="Proton donor" evidence="1">
    <location>
        <position position="204"/>
    </location>
</feature>
<feature type="active site" description="Proton acceptor" evidence="1">
    <location>
        <position position="336"/>
    </location>
</feature>
<feature type="binding site" evidence="1">
    <location>
        <position position="162"/>
    </location>
    <ligand>
        <name>(2R)-2-phosphoglycerate</name>
        <dbReference type="ChEBI" id="CHEBI:58289"/>
    </ligand>
</feature>
<feature type="binding site" evidence="1">
    <location>
        <position position="241"/>
    </location>
    <ligand>
        <name>Mg(2+)</name>
        <dbReference type="ChEBI" id="CHEBI:18420"/>
    </ligand>
</feature>
<feature type="binding site" evidence="1">
    <location>
        <position position="284"/>
    </location>
    <ligand>
        <name>Mg(2+)</name>
        <dbReference type="ChEBI" id="CHEBI:18420"/>
    </ligand>
</feature>
<feature type="binding site" evidence="1">
    <location>
        <position position="311"/>
    </location>
    <ligand>
        <name>Mg(2+)</name>
        <dbReference type="ChEBI" id="CHEBI:18420"/>
    </ligand>
</feature>
<feature type="binding site" evidence="1">
    <location>
        <position position="336"/>
    </location>
    <ligand>
        <name>(2R)-2-phosphoglycerate</name>
        <dbReference type="ChEBI" id="CHEBI:58289"/>
    </ligand>
</feature>
<feature type="binding site" evidence="1">
    <location>
        <position position="365"/>
    </location>
    <ligand>
        <name>(2R)-2-phosphoglycerate</name>
        <dbReference type="ChEBI" id="CHEBI:58289"/>
    </ligand>
</feature>
<feature type="binding site" evidence="1">
    <location>
        <position position="366"/>
    </location>
    <ligand>
        <name>(2R)-2-phosphoglycerate</name>
        <dbReference type="ChEBI" id="CHEBI:58289"/>
    </ligand>
</feature>
<feature type="binding site" evidence="1">
    <location>
        <position position="387"/>
    </location>
    <ligand>
        <name>(2R)-2-phosphoglycerate</name>
        <dbReference type="ChEBI" id="CHEBI:58289"/>
    </ligand>
</feature>
<keyword id="KW-0963">Cytoplasm</keyword>
<keyword id="KW-0324">Glycolysis</keyword>
<keyword id="KW-0456">Lyase</keyword>
<keyword id="KW-0460">Magnesium</keyword>
<keyword id="KW-0479">Metal-binding</keyword>
<keyword id="KW-1185">Reference proteome</keyword>
<keyword id="KW-0964">Secreted</keyword>
<proteinExistence type="inferred from homology"/>
<organism>
    <name type="scientific">Natranaerobius thermophilus (strain ATCC BAA-1301 / DSM 18059 / JW/NM-WN-LF)</name>
    <dbReference type="NCBI Taxonomy" id="457570"/>
    <lineage>
        <taxon>Bacteria</taxon>
        <taxon>Bacillati</taxon>
        <taxon>Bacillota</taxon>
        <taxon>Clostridia</taxon>
        <taxon>Natranaerobiales</taxon>
        <taxon>Natranaerobiaceae</taxon>
        <taxon>Natranaerobius</taxon>
    </lineage>
</organism>
<dbReference type="EC" id="4.2.1.11" evidence="1"/>
<dbReference type="EMBL" id="CP001034">
    <property type="protein sequence ID" value="ACB85582.1"/>
    <property type="molecule type" value="Genomic_DNA"/>
</dbReference>
<dbReference type="RefSeq" id="WP_012448439.1">
    <property type="nucleotide sequence ID" value="NC_010718.1"/>
</dbReference>
<dbReference type="SMR" id="B2A6Z1"/>
<dbReference type="FunCoup" id="B2A6Z1">
    <property type="interactions" value="306"/>
</dbReference>
<dbReference type="STRING" id="457570.Nther_2015"/>
<dbReference type="KEGG" id="nth:Nther_2015"/>
<dbReference type="eggNOG" id="COG0148">
    <property type="taxonomic scope" value="Bacteria"/>
</dbReference>
<dbReference type="HOGENOM" id="CLU_031223_2_1_9"/>
<dbReference type="InParanoid" id="B2A6Z1"/>
<dbReference type="OrthoDB" id="9804716at2"/>
<dbReference type="UniPathway" id="UPA00109">
    <property type="reaction ID" value="UER00187"/>
</dbReference>
<dbReference type="Proteomes" id="UP000001683">
    <property type="component" value="Chromosome"/>
</dbReference>
<dbReference type="GO" id="GO:0009986">
    <property type="term" value="C:cell surface"/>
    <property type="evidence" value="ECO:0007669"/>
    <property type="project" value="UniProtKB-SubCell"/>
</dbReference>
<dbReference type="GO" id="GO:0005576">
    <property type="term" value="C:extracellular region"/>
    <property type="evidence" value="ECO:0007669"/>
    <property type="project" value="UniProtKB-SubCell"/>
</dbReference>
<dbReference type="GO" id="GO:0000015">
    <property type="term" value="C:phosphopyruvate hydratase complex"/>
    <property type="evidence" value="ECO:0007669"/>
    <property type="project" value="InterPro"/>
</dbReference>
<dbReference type="GO" id="GO:0000287">
    <property type="term" value="F:magnesium ion binding"/>
    <property type="evidence" value="ECO:0007669"/>
    <property type="project" value="UniProtKB-UniRule"/>
</dbReference>
<dbReference type="GO" id="GO:0004634">
    <property type="term" value="F:phosphopyruvate hydratase activity"/>
    <property type="evidence" value="ECO:0007669"/>
    <property type="project" value="UniProtKB-UniRule"/>
</dbReference>
<dbReference type="GO" id="GO:0006096">
    <property type="term" value="P:glycolytic process"/>
    <property type="evidence" value="ECO:0007669"/>
    <property type="project" value="UniProtKB-UniRule"/>
</dbReference>
<dbReference type="CDD" id="cd03313">
    <property type="entry name" value="enolase"/>
    <property type="match status" value="1"/>
</dbReference>
<dbReference type="FunFam" id="3.20.20.120:FF:000001">
    <property type="entry name" value="Enolase"/>
    <property type="match status" value="1"/>
</dbReference>
<dbReference type="FunFam" id="3.30.390.10:FF:000001">
    <property type="entry name" value="Enolase"/>
    <property type="match status" value="1"/>
</dbReference>
<dbReference type="Gene3D" id="3.20.20.120">
    <property type="entry name" value="Enolase-like C-terminal domain"/>
    <property type="match status" value="1"/>
</dbReference>
<dbReference type="Gene3D" id="3.30.390.10">
    <property type="entry name" value="Enolase-like, N-terminal domain"/>
    <property type="match status" value="1"/>
</dbReference>
<dbReference type="HAMAP" id="MF_00318">
    <property type="entry name" value="Enolase"/>
    <property type="match status" value="1"/>
</dbReference>
<dbReference type="InterPro" id="IPR000941">
    <property type="entry name" value="Enolase"/>
</dbReference>
<dbReference type="InterPro" id="IPR036849">
    <property type="entry name" value="Enolase-like_C_sf"/>
</dbReference>
<dbReference type="InterPro" id="IPR029017">
    <property type="entry name" value="Enolase-like_N"/>
</dbReference>
<dbReference type="InterPro" id="IPR020810">
    <property type="entry name" value="Enolase_C"/>
</dbReference>
<dbReference type="InterPro" id="IPR020809">
    <property type="entry name" value="Enolase_CS"/>
</dbReference>
<dbReference type="InterPro" id="IPR020811">
    <property type="entry name" value="Enolase_N"/>
</dbReference>
<dbReference type="NCBIfam" id="TIGR01060">
    <property type="entry name" value="eno"/>
    <property type="match status" value="1"/>
</dbReference>
<dbReference type="PANTHER" id="PTHR11902">
    <property type="entry name" value="ENOLASE"/>
    <property type="match status" value="1"/>
</dbReference>
<dbReference type="PANTHER" id="PTHR11902:SF1">
    <property type="entry name" value="ENOLASE"/>
    <property type="match status" value="1"/>
</dbReference>
<dbReference type="Pfam" id="PF00113">
    <property type="entry name" value="Enolase_C"/>
    <property type="match status" value="1"/>
</dbReference>
<dbReference type="Pfam" id="PF03952">
    <property type="entry name" value="Enolase_N"/>
    <property type="match status" value="1"/>
</dbReference>
<dbReference type="PIRSF" id="PIRSF001400">
    <property type="entry name" value="Enolase"/>
    <property type="match status" value="1"/>
</dbReference>
<dbReference type="PRINTS" id="PR00148">
    <property type="entry name" value="ENOLASE"/>
</dbReference>
<dbReference type="SFLD" id="SFLDF00002">
    <property type="entry name" value="enolase"/>
    <property type="match status" value="1"/>
</dbReference>
<dbReference type="SFLD" id="SFLDG00178">
    <property type="entry name" value="enolase"/>
    <property type="match status" value="1"/>
</dbReference>
<dbReference type="SMART" id="SM01192">
    <property type="entry name" value="Enolase_C"/>
    <property type="match status" value="1"/>
</dbReference>
<dbReference type="SMART" id="SM01193">
    <property type="entry name" value="Enolase_N"/>
    <property type="match status" value="1"/>
</dbReference>
<dbReference type="SUPFAM" id="SSF51604">
    <property type="entry name" value="Enolase C-terminal domain-like"/>
    <property type="match status" value="1"/>
</dbReference>
<dbReference type="SUPFAM" id="SSF54826">
    <property type="entry name" value="Enolase N-terminal domain-like"/>
    <property type="match status" value="1"/>
</dbReference>
<dbReference type="PROSITE" id="PS00164">
    <property type="entry name" value="ENOLASE"/>
    <property type="match status" value="1"/>
</dbReference>
<name>ENO_NATTJ</name>